<proteinExistence type="inferred from homology"/>
<accession>Q5AL29</accession>
<accession>A0A1D8PFK3</accession>
<accession>Q5ALF4</accession>
<gene>
    <name type="primary">REX3</name>
    <name type="ordered locus">CAALFM_C113200CA</name>
    <name type="ORF">CaO19.12413</name>
    <name type="ORF">CaO19.4948</name>
</gene>
<evidence type="ECO:0000250" key="1"/>
<evidence type="ECO:0000256" key="2">
    <source>
        <dbReference type="SAM" id="MobiDB-lite"/>
    </source>
</evidence>
<evidence type="ECO:0000305" key="3"/>
<dbReference type="EC" id="3.1.-.-"/>
<dbReference type="EMBL" id="CP017623">
    <property type="protein sequence ID" value="AOW26928.1"/>
    <property type="molecule type" value="Genomic_DNA"/>
</dbReference>
<dbReference type="RefSeq" id="XP_722159.2">
    <property type="nucleotide sequence ID" value="XM_717066.2"/>
</dbReference>
<dbReference type="SMR" id="Q5AL29"/>
<dbReference type="FunCoup" id="Q5AL29">
    <property type="interactions" value="87"/>
</dbReference>
<dbReference type="STRING" id="237561.Q5AL29"/>
<dbReference type="EnsemblFungi" id="C1_13200C_A-T">
    <property type="protein sequence ID" value="C1_13200C_A-T-p1"/>
    <property type="gene ID" value="C1_13200C_A"/>
</dbReference>
<dbReference type="GeneID" id="3636164"/>
<dbReference type="KEGG" id="cal:CAALFM_C113200CA"/>
<dbReference type="CGD" id="CAL0000199313">
    <property type="gene designation" value="REX3"/>
</dbReference>
<dbReference type="VEuPathDB" id="FungiDB:C1_13200C_A"/>
<dbReference type="eggNOG" id="KOG2248">
    <property type="taxonomic scope" value="Eukaryota"/>
</dbReference>
<dbReference type="HOGENOM" id="CLU_022453_5_4_1"/>
<dbReference type="InParanoid" id="Q5AL29"/>
<dbReference type="OrthoDB" id="3996471at2759"/>
<dbReference type="PRO" id="PR:Q5AL29"/>
<dbReference type="Proteomes" id="UP000000559">
    <property type="component" value="Chromosome 1"/>
</dbReference>
<dbReference type="GO" id="GO:0005737">
    <property type="term" value="C:cytoplasm"/>
    <property type="evidence" value="ECO:0007669"/>
    <property type="project" value="UniProtKB-SubCell"/>
</dbReference>
<dbReference type="GO" id="GO:0005634">
    <property type="term" value="C:nucleus"/>
    <property type="evidence" value="ECO:0000318"/>
    <property type="project" value="GO_Central"/>
</dbReference>
<dbReference type="GO" id="GO:0004527">
    <property type="term" value="F:exonuclease activity"/>
    <property type="evidence" value="ECO:0000318"/>
    <property type="project" value="GO_Central"/>
</dbReference>
<dbReference type="GO" id="GO:0003676">
    <property type="term" value="F:nucleic acid binding"/>
    <property type="evidence" value="ECO:0007669"/>
    <property type="project" value="InterPro"/>
</dbReference>
<dbReference type="GO" id="GO:0031125">
    <property type="term" value="P:rRNA 3'-end processing"/>
    <property type="evidence" value="ECO:0000318"/>
    <property type="project" value="GO_Central"/>
</dbReference>
<dbReference type="CDD" id="cd06145">
    <property type="entry name" value="REX1_like"/>
    <property type="match status" value="1"/>
</dbReference>
<dbReference type="FunFam" id="3.30.420.10:FF:000031">
    <property type="entry name" value="RNA exonuclease 1"/>
    <property type="match status" value="1"/>
</dbReference>
<dbReference type="Gene3D" id="3.30.420.10">
    <property type="entry name" value="Ribonuclease H-like superfamily/Ribonuclease H"/>
    <property type="match status" value="1"/>
</dbReference>
<dbReference type="InterPro" id="IPR013520">
    <property type="entry name" value="Exonuclease_RNaseT/DNA_pol3"/>
</dbReference>
<dbReference type="InterPro" id="IPR034922">
    <property type="entry name" value="REX1-like_exo"/>
</dbReference>
<dbReference type="InterPro" id="IPR047021">
    <property type="entry name" value="REXO1/3/4-like"/>
</dbReference>
<dbReference type="InterPro" id="IPR012337">
    <property type="entry name" value="RNaseH-like_sf"/>
</dbReference>
<dbReference type="InterPro" id="IPR036397">
    <property type="entry name" value="RNaseH_sf"/>
</dbReference>
<dbReference type="PANTHER" id="PTHR12801:SF118">
    <property type="entry name" value="RNA EXONUCLEASE 3"/>
    <property type="match status" value="1"/>
</dbReference>
<dbReference type="PANTHER" id="PTHR12801">
    <property type="entry name" value="RNA EXONUCLEASE REXO1 / RECO3 FAMILY MEMBER-RELATED"/>
    <property type="match status" value="1"/>
</dbReference>
<dbReference type="SMART" id="SM00479">
    <property type="entry name" value="EXOIII"/>
    <property type="match status" value="1"/>
</dbReference>
<dbReference type="SUPFAM" id="SSF53098">
    <property type="entry name" value="Ribonuclease H-like"/>
    <property type="match status" value="1"/>
</dbReference>
<organism>
    <name type="scientific">Candida albicans (strain SC5314 / ATCC MYA-2876)</name>
    <name type="common">Yeast</name>
    <dbReference type="NCBI Taxonomy" id="237561"/>
    <lineage>
        <taxon>Eukaryota</taxon>
        <taxon>Fungi</taxon>
        <taxon>Dikarya</taxon>
        <taxon>Ascomycota</taxon>
        <taxon>Saccharomycotina</taxon>
        <taxon>Pichiomycetes</taxon>
        <taxon>Debaryomycetaceae</taxon>
        <taxon>Candida/Lodderomyces clade</taxon>
        <taxon>Candida</taxon>
    </lineage>
</organism>
<sequence>MNNNAQNKRSLDDSNGNDTKRPKQEDPKYILPKQVNTYPATLPERKKNIEYILNILTKKQPNITNPKLKAIDIEYEIAKKSTNATYKTVFRQEVFKLTKPTKSPSQLSPQQEHLKKLDQEAKELKILKEMVVSRKTLIAFGYIMEPPESIPNEKITRICNRCGTEFRLDQQLQPIVCEFHHGKKQRGKYICCMSNVDGQPCSKAKNHVYLLNTPEEKQALLPYQFTKELFTTTSTKSKSRVLGIDCEMGFTTKGFELMRITAIDYFTSKTVLDIFIKPIGEIVDFNTRYSGIHELTDDFLSWEQSMEKLGEIMDSETILIGHGLENDMNAMRLIHENIIDTSILFPNKWKTGPTRRWSLKDLAFEFLSRRIQTGEHDSCEDSIAAIDIVKYFVKKRLQSIGSSS</sequence>
<keyword id="KW-0963">Cytoplasm</keyword>
<keyword id="KW-0269">Exonuclease</keyword>
<keyword id="KW-0378">Hydrolase</keyword>
<keyword id="KW-0540">Nuclease</keyword>
<keyword id="KW-0539">Nucleus</keyword>
<keyword id="KW-1185">Reference proteome</keyword>
<keyword id="KW-0698">rRNA processing</keyword>
<name>REXO3_CANAL</name>
<protein>
    <recommendedName>
        <fullName>RNA exonuclease 3</fullName>
        <ecNumber>3.1.-.-</ecNumber>
    </recommendedName>
</protein>
<comment type="function">
    <text evidence="1">3' to 5' exoribonuclease required for proper 3' end maturation of MRP RNA and of the U5L snRNA.</text>
</comment>
<comment type="subcellular location">
    <subcellularLocation>
        <location evidence="1">Cytoplasm</location>
    </subcellularLocation>
    <subcellularLocation>
        <location evidence="1">Nucleus</location>
    </subcellularLocation>
</comment>
<comment type="similarity">
    <text evidence="3">Belongs to the REXO1/REXO3 family.</text>
</comment>
<feature type="chain" id="PRO_0000120931" description="RNA exonuclease 3">
    <location>
        <begin position="1"/>
        <end position="404"/>
    </location>
</feature>
<feature type="domain" description="Exonuclease">
    <location>
        <begin position="241"/>
        <end position="389"/>
    </location>
</feature>
<feature type="region of interest" description="Disordered" evidence="2">
    <location>
        <begin position="1"/>
        <end position="29"/>
    </location>
</feature>
<feature type="compositionally biased region" description="Polar residues" evidence="2">
    <location>
        <begin position="1"/>
        <end position="17"/>
    </location>
</feature>
<feature type="compositionally biased region" description="Basic and acidic residues" evidence="2">
    <location>
        <begin position="18"/>
        <end position="28"/>
    </location>
</feature>
<reference key="1">
    <citation type="journal article" date="2004" name="Proc. Natl. Acad. Sci. U.S.A.">
        <title>The diploid genome sequence of Candida albicans.</title>
        <authorList>
            <person name="Jones T."/>
            <person name="Federspiel N.A."/>
            <person name="Chibana H."/>
            <person name="Dungan J."/>
            <person name="Kalman S."/>
            <person name="Magee B.B."/>
            <person name="Newport G."/>
            <person name="Thorstenson Y.R."/>
            <person name="Agabian N."/>
            <person name="Magee P.T."/>
            <person name="Davis R.W."/>
            <person name="Scherer S."/>
        </authorList>
    </citation>
    <scope>NUCLEOTIDE SEQUENCE [LARGE SCALE GENOMIC DNA]</scope>
    <source>
        <strain>SC5314 / ATCC MYA-2876</strain>
    </source>
</reference>
<reference key="2">
    <citation type="journal article" date="2007" name="Genome Biol.">
        <title>Assembly of the Candida albicans genome into sixteen supercontigs aligned on the eight chromosomes.</title>
        <authorList>
            <person name="van het Hoog M."/>
            <person name="Rast T.J."/>
            <person name="Martchenko M."/>
            <person name="Grindle S."/>
            <person name="Dignard D."/>
            <person name="Hogues H."/>
            <person name="Cuomo C."/>
            <person name="Berriman M."/>
            <person name="Scherer S."/>
            <person name="Magee B.B."/>
            <person name="Whiteway M."/>
            <person name="Chibana H."/>
            <person name="Nantel A."/>
            <person name="Magee P.T."/>
        </authorList>
    </citation>
    <scope>GENOME REANNOTATION</scope>
    <source>
        <strain>SC5314 / ATCC MYA-2876</strain>
    </source>
</reference>
<reference key="3">
    <citation type="journal article" date="2013" name="Genome Biol.">
        <title>Assembly of a phased diploid Candida albicans genome facilitates allele-specific measurements and provides a simple model for repeat and indel structure.</title>
        <authorList>
            <person name="Muzzey D."/>
            <person name="Schwartz K."/>
            <person name="Weissman J.S."/>
            <person name="Sherlock G."/>
        </authorList>
    </citation>
    <scope>NUCLEOTIDE SEQUENCE [LARGE SCALE GENOMIC DNA]</scope>
    <scope>GENOME REANNOTATION</scope>
    <source>
        <strain>SC5314 / ATCC MYA-2876</strain>
    </source>
</reference>